<name>ADE_CHLL3</name>
<feature type="chain" id="PRO_1000081927" description="Adenine deaminase">
    <location>
        <begin position="1"/>
        <end position="341"/>
    </location>
</feature>
<feature type="active site" description="Proton donor" evidence="1">
    <location>
        <position position="200"/>
    </location>
</feature>
<feature type="binding site" evidence="1">
    <location>
        <position position="17"/>
    </location>
    <ligand>
        <name>Zn(2+)</name>
        <dbReference type="ChEBI" id="CHEBI:29105"/>
        <note>catalytic</note>
    </ligand>
</feature>
<feature type="binding site" evidence="1">
    <location>
        <position position="19"/>
    </location>
    <ligand>
        <name>Zn(2+)</name>
        <dbReference type="ChEBI" id="CHEBI:29105"/>
        <note>catalytic</note>
    </ligand>
</feature>
<feature type="binding site" evidence="1">
    <location>
        <position position="197"/>
    </location>
    <ligand>
        <name>Zn(2+)</name>
        <dbReference type="ChEBI" id="CHEBI:29105"/>
        <note>catalytic</note>
    </ligand>
</feature>
<feature type="binding site" evidence="1">
    <location>
        <position position="278"/>
    </location>
    <ligand>
        <name>Zn(2+)</name>
        <dbReference type="ChEBI" id="CHEBI:29105"/>
        <note>catalytic</note>
    </ligand>
</feature>
<feature type="binding site" evidence="1">
    <location>
        <position position="279"/>
    </location>
    <ligand>
        <name>substrate</name>
    </ligand>
</feature>
<feature type="site" description="Important for catalytic activity" evidence="1">
    <location>
        <position position="221"/>
    </location>
</feature>
<keyword id="KW-0378">Hydrolase</keyword>
<keyword id="KW-0479">Metal-binding</keyword>
<keyword id="KW-0546">Nucleotide metabolism</keyword>
<keyword id="KW-1185">Reference proteome</keyword>
<keyword id="KW-0862">Zinc</keyword>
<reference key="1">
    <citation type="submission" date="2005-08" db="EMBL/GenBank/DDBJ databases">
        <title>Complete sequence of Pelodictyon luteolum DSM 273.</title>
        <authorList>
            <consortium name="US DOE Joint Genome Institute"/>
            <person name="Copeland A."/>
            <person name="Lucas S."/>
            <person name="Lapidus A."/>
            <person name="Barry K."/>
            <person name="Detter J.C."/>
            <person name="Glavina T."/>
            <person name="Hammon N."/>
            <person name="Israni S."/>
            <person name="Pitluck S."/>
            <person name="Bryant D."/>
            <person name="Schmutz J."/>
            <person name="Larimer F."/>
            <person name="Land M."/>
            <person name="Kyrpides N."/>
            <person name="Ivanova N."/>
            <person name="Richardson P."/>
        </authorList>
    </citation>
    <scope>NUCLEOTIDE SEQUENCE [LARGE SCALE GENOMIC DNA]</scope>
    <source>
        <strain>DSM 273 / BCRC 81028 / 2530</strain>
    </source>
</reference>
<comment type="function">
    <text evidence="1">Catalyzes the hydrolytic deamination of adenine to hypoxanthine. Plays an important role in the purine salvage pathway and in nitrogen catabolism.</text>
</comment>
<comment type="catalytic activity">
    <reaction evidence="1">
        <text>adenine + H2O + H(+) = hypoxanthine + NH4(+)</text>
        <dbReference type="Rhea" id="RHEA:23688"/>
        <dbReference type="ChEBI" id="CHEBI:15377"/>
        <dbReference type="ChEBI" id="CHEBI:15378"/>
        <dbReference type="ChEBI" id="CHEBI:16708"/>
        <dbReference type="ChEBI" id="CHEBI:17368"/>
        <dbReference type="ChEBI" id="CHEBI:28938"/>
        <dbReference type="EC" id="3.5.4.2"/>
    </reaction>
</comment>
<comment type="cofactor">
    <cofactor evidence="1">
        <name>Zn(2+)</name>
        <dbReference type="ChEBI" id="CHEBI:29105"/>
    </cofactor>
    <text evidence="1">Binds 1 zinc ion per subunit.</text>
</comment>
<comment type="similarity">
    <text evidence="1">Belongs to the metallo-dependent hydrolases superfamily. Adenosine and AMP deaminases family. Adenine deaminase type 2 subfamily.</text>
</comment>
<sequence>MTTVPCFIAGLPKAELHLHIEGTLEPAMMLRLAERNRQPPPFPDVETAEKAYRFTNLQSFLDIYYRSTEVLVTEEDFYDLTLAYLEKAASQKIGHAEIFFDPQAHTVRGIAFATVLRGMEEACREAHSRLGISTRLIMCILRHLSEQEGMTMLNEAVRWKRWITGIGLDSSERGNPPSKFHNLYREARREGFFLTAHAGEEGSAASVKETLDLLHVDRIDHGVRCMDDPALVKELVRRAVPLTVCPLSNVKLQVFGSMQEHNLKAMLEKGLMVTLNSDDPAYFGGYLNDNFTAAAEALDLSFSDIIRLAANSFNASMLSIVQKKIHLLELADYARGFAPGH</sequence>
<gene>
    <name type="ordered locus">Plut_1524</name>
</gene>
<accession>Q3B2Q0</accession>
<evidence type="ECO:0000255" key="1">
    <source>
        <dbReference type="HAMAP-Rule" id="MF_01962"/>
    </source>
</evidence>
<organism>
    <name type="scientific">Chlorobium luteolum (strain DSM 273 / BCRC 81028 / 2530)</name>
    <name type="common">Pelodictyon luteolum</name>
    <dbReference type="NCBI Taxonomy" id="319225"/>
    <lineage>
        <taxon>Bacteria</taxon>
        <taxon>Pseudomonadati</taxon>
        <taxon>Chlorobiota</taxon>
        <taxon>Chlorobiia</taxon>
        <taxon>Chlorobiales</taxon>
        <taxon>Chlorobiaceae</taxon>
        <taxon>Chlorobium/Pelodictyon group</taxon>
        <taxon>Pelodictyon</taxon>
    </lineage>
</organism>
<dbReference type="EC" id="3.5.4.2" evidence="1"/>
<dbReference type="EMBL" id="CP000096">
    <property type="protein sequence ID" value="ABB24381.1"/>
    <property type="molecule type" value="Genomic_DNA"/>
</dbReference>
<dbReference type="RefSeq" id="WP_011358253.1">
    <property type="nucleotide sequence ID" value="NC_007512.1"/>
</dbReference>
<dbReference type="SMR" id="Q3B2Q0"/>
<dbReference type="STRING" id="319225.Plut_1524"/>
<dbReference type="KEGG" id="plt:Plut_1524"/>
<dbReference type="eggNOG" id="COG1816">
    <property type="taxonomic scope" value="Bacteria"/>
</dbReference>
<dbReference type="HOGENOM" id="CLU_039228_7_0_10"/>
<dbReference type="OrthoDB" id="9779574at2"/>
<dbReference type="Proteomes" id="UP000002709">
    <property type="component" value="Chromosome"/>
</dbReference>
<dbReference type="GO" id="GO:0005829">
    <property type="term" value="C:cytosol"/>
    <property type="evidence" value="ECO:0007669"/>
    <property type="project" value="TreeGrafter"/>
</dbReference>
<dbReference type="GO" id="GO:0000034">
    <property type="term" value="F:adenine deaminase activity"/>
    <property type="evidence" value="ECO:0007669"/>
    <property type="project" value="UniProtKB-UniRule"/>
</dbReference>
<dbReference type="GO" id="GO:0008270">
    <property type="term" value="F:zinc ion binding"/>
    <property type="evidence" value="ECO:0007669"/>
    <property type="project" value="UniProtKB-UniRule"/>
</dbReference>
<dbReference type="GO" id="GO:0006146">
    <property type="term" value="P:adenine catabolic process"/>
    <property type="evidence" value="ECO:0007669"/>
    <property type="project" value="UniProtKB-UniRule"/>
</dbReference>
<dbReference type="GO" id="GO:0043103">
    <property type="term" value="P:hypoxanthine salvage"/>
    <property type="evidence" value="ECO:0007669"/>
    <property type="project" value="UniProtKB-UniRule"/>
</dbReference>
<dbReference type="GO" id="GO:0009117">
    <property type="term" value="P:nucleotide metabolic process"/>
    <property type="evidence" value="ECO:0007669"/>
    <property type="project" value="UniProtKB-KW"/>
</dbReference>
<dbReference type="CDD" id="cd01320">
    <property type="entry name" value="ADA"/>
    <property type="match status" value="1"/>
</dbReference>
<dbReference type="Gene3D" id="3.20.20.140">
    <property type="entry name" value="Metal-dependent hydrolases"/>
    <property type="match status" value="1"/>
</dbReference>
<dbReference type="HAMAP" id="MF_01962">
    <property type="entry name" value="Adenine_deaminase"/>
    <property type="match status" value="1"/>
</dbReference>
<dbReference type="InterPro" id="IPR001365">
    <property type="entry name" value="A_deaminase_dom"/>
</dbReference>
<dbReference type="InterPro" id="IPR028892">
    <property type="entry name" value="ADE"/>
</dbReference>
<dbReference type="InterPro" id="IPR006330">
    <property type="entry name" value="Ado/ade_deaminase"/>
</dbReference>
<dbReference type="InterPro" id="IPR032466">
    <property type="entry name" value="Metal_Hydrolase"/>
</dbReference>
<dbReference type="NCBIfam" id="TIGR01430">
    <property type="entry name" value="aden_deam"/>
    <property type="match status" value="1"/>
</dbReference>
<dbReference type="NCBIfam" id="NF006850">
    <property type="entry name" value="PRK09358.1-6"/>
    <property type="match status" value="1"/>
</dbReference>
<dbReference type="PANTHER" id="PTHR43114">
    <property type="entry name" value="ADENINE DEAMINASE"/>
    <property type="match status" value="1"/>
</dbReference>
<dbReference type="PANTHER" id="PTHR43114:SF6">
    <property type="entry name" value="ADENINE DEAMINASE"/>
    <property type="match status" value="1"/>
</dbReference>
<dbReference type="Pfam" id="PF00962">
    <property type="entry name" value="A_deaminase"/>
    <property type="match status" value="1"/>
</dbReference>
<dbReference type="SUPFAM" id="SSF51556">
    <property type="entry name" value="Metallo-dependent hydrolases"/>
    <property type="match status" value="1"/>
</dbReference>
<protein>
    <recommendedName>
        <fullName evidence="1">Adenine deaminase</fullName>
        <shortName evidence="1">ADE</shortName>
        <ecNumber evidence="1">3.5.4.2</ecNumber>
    </recommendedName>
    <alternativeName>
        <fullName evidence="1">Adenine aminohydrolase</fullName>
        <shortName evidence="1">AAH</shortName>
    </alternativeName>
</protein>
<proteinExistence type="inferred from homology"/>